<protein>
    <recommendedName>
        <fullName evidence="1">Triosephosphate isomerase</fullName>
        <shortName evidence="1">TIM</shortName>
        <shortName evidence="1">TPI</shortName>
        <ecNumber evidence="1">5.3.1.1</ecNumber>
    </recommendedName>
    <alternativeName>
        <fullName evidence="1">Triose-phosphate isomerase</fullName>
    </alternativeName>
</protein>
<keyword id="KW-0963">Cytoplasm</keyword>
<keyword id="KW-0312">Gluconeogenesis</keyword>
<keyword id="KW-0324">Glycolysis</keyword>
<keyword id="KW-0413">Isomerase</keyword>
<dbReference type="EC" id="5.3.1.1" evidence="1"/>
<dbReference type="EMBL" id="AM406671">
    <property type="protein sequence ID" value="CAL98006.1"/>
    <property type="molecule type" value="Genomic_DNA"/>
</dbReference>
<dbReference type="RefSeq" id="WP_011835282.1">
    <property type="nucleotide sequence ID" value="NC_009004.1"/>
</dbReference>
<dbReference type="SMR" id="A2RL40"/>
<dbReference type="STRING" id="416870.llmg_1424"/>
<dbReference type="KEGG" id="llm:llmg_1424"/>
<dbReference type="eggNOG" id="COG0149">
    <property type="taxonomic scope" value="Bacteria"/>
</dbReference>
<dbReference type="HOGENOM" id="CLU_024251_2_3_9"/>
<dbReference type="OrthoDB" id="9809429at2"/>
<dbReference type="PhylomeDB" id="A2RL40"/>
<dbReference type="UniPathway" id="UPA00109">
    <property type="reaction ID" value="UER00189"/>
</dbReference>
<dbReference type="UniPathway" id="UPA00138"/>
<dbReference type="Proteomes" id="UP000000364">
    <property type="component" value="Chromosome"/>
</dbReference>
<dbReference type="GO" id="GO:0005829">
    <property type="term" value="C:cytosol"/>
    <property type="evidence" value="ECO:0007669"/>
    <property type="project" value="TreeGrafter"/>
</dbReference>
<dbReference type="GO" id="GO:0004807">
    <property type="term" value="F:triose-phosphate isomerase activity"/>
    <property type="evidence" value="ECO:0007669"/>
    <property type="project" value="UniProtKB-UniRule"/>
</dbReference>
<dbReference type="GO" id="GO:0006094">
    <property type="term" value="P:gluconeogenesis"/>
    <property type="evidence" value="ECO:0007669"/>
    <property type="project" value="UniProtKB-UniRule"/>
</dbReference>
<dbReference type="GO" id="GO:0046166">
    <property type="term" value="P:glyceraldehyde-3-phosphate biosynthetic process"/>
    <property type="evidence" value="ECO:0007669"/>
    <property type="project" value="TreeGrafter"/>
</dbReference>
<dbReference type="GO" id="GO:0019563">
    <property type="term" value="P:glycerol catabolic process"/>
    <property type="evidence" value="ECO:0007669"/>
    <property type="project" value="TreeGrafter"/>
</dbReference>
<dbReference type="GO" id="GO:0006096">
    <property type="term" value="P:glycolytic process"/>
    <property type="evidence" value="ECO:0007669"/>
    <property type="project" value="UniProtKB-UniRule"/>
</dbReference>
<dbReference type="CDD" id="cd00311">
    <property type="entry name" value="TIM"/>
    <property type="match status" value="1"/>
</dbReference>
<dbReference type="FunFam" id="3.20.20.70:FF:000016">
    <property type="entry name" value="Triosephosphate isomerase"/>
    <property type="match status" value="1"/>
</dbReference>
<dbReference type="Gene3D" id="3.20.20.70">
    <property type="entry name" value="Aldolase class I"/>
    <property type="match status" value="1"/>
</dbReference>
<dbReference type="HAMAP" id="MF_00147_B">
    <property type="entry name" value="TIM_B"/>
    <property type="match status" value="1"/>
</dbReference>
<dbReference type="InterPro" id="IPR013785">
    <property type="entry name" value="Aldolase_TIM"/>
</dbReference>
<dbReference type="InterPro" id="IPR035990">
    <property type="entry name" value="TIM_sf"/>
</dbReference>
<dbReference type="InterPro" id="IPR022896">
    <property type="entry name" value="TrioseP_Isoase_bac/euk"/>
</dbReference>
<dbReference type="InterPro" id="IPR000652">
    <property type="entry name" value="Triosephosphate_isomerase"/>
</dbReference>
<dbReference type="InterPro" id="IPR020861">
    <property type="entry name" value="Triosephosphate_isomerase_AS"/>
</dbReference>
<dbReference type="NCBIfam" id="TIGR00419">
    <property type="entry name" value="tim"/>
    <property type="match status" value="1"/>
</dbReference>
<dbReference type="PANTHER" id="PTHR21139">
    <property type="entry name" value="TRIOSEPHOSPHATE ISOMERASE"/>
    <property type="match status" value="1"/>
</dbReference>
<dbReference type="PANTHER" id="PTHR21139:SF42">
    <property type="entry name" value="TRIOSEPHOSPHATE ISOMERASE"/>
    <property type="match status" value="1"/>
</dbReference>
<dbReference type="Pfam" id="PF00121">
    <property type="entry name" value="TIM"/>
    <property type="match status" value="1"/>
</dbReference>
<dbReference type="SUPFAM" id="SSF51351">
    <property type="entry name" value="Triosephosphate isomerase (TIM)"/>
    <property type="match status" value="1"/>
</dbReference>
<dbReference type="PROSITE" id="PS00171">
    <property type="entry name" value="TIM_1"/>
    <property type="match status" value="1"/>
</dbReference>
<dbReference type="PROSITE" id="PS51440">
    <property type="entry name" value="TIM_2"/>
    <property type="match status" value="1"/>
</dbReference>
<accession>A2RL40</accession>
<evidence type="ECO:0000255" key="1">
    <source>
        <dbReference type="HAMAP-Rule" id="MF_00147"/>
    </source>
</evidence>
<sequence length="252" mass="26933">MSRKPIIAGNWKMNKTLSEAQAFVEAVKNNLPSSDNVESVIGAPALFLAPMAYLRQGSELKLAAENSYFENAGAFTGENSPAAIVDLGIEYIIIGHSERREYFHETDEDINKKAKAIFAAGATPILCCGETLETFEAGKTAEWVSGQIEAGLAGLTAEQVSNLVIAYEPIWAIGTGKTATNEIADETCGVVRSTVEKLYGKEVSEAVRIQYGGSVKPETIEGLMAKENIDGALVGGASLEADSFLALLEMYK</sequence>
<feature type="chain" id="PRO_0000307488" description="Triosephosphate isomerase">
    <location>
        <begin position="1"/>
        <end position="252"/>
    </location>
</feature>
<feature type="active site" description="Electrophile" evidence="1">
    <location>
        <position position="96"/>
    </location>
</feature>
<feature type="active site" description="Proton acceptor" evidence="1">
    <location>
        <position position="168"/>
    </location>
</feature>
<feature type="binding site" evidence="1">
    <location>
        <begin position="10"/>
        <end position="12"/>
    </location>
    <ligand>
        <name>substrate</name>
    </ligand>
</feature>
<feature type="binding site" evidence="1">
    <location>
        <position position="174"/>
    </location>
    <ligand>
        <name>substrate</name>
    </ligand>
</feature>
<feature type="binding site" evidence="1">
    <location>
        <position position="214"/>
    </location>
    <ligand>
        <name>substrate</name>
    </ligand>
</feature>
<feature type="binding site" evidence="1">
    <location>
        <begin position="235"/>
        <end position="236"/>
    </location>
    <ligand>
        <name>substrate</name>
    </ligand>
</feature>
<comment type="function">
    <text evidence="1">Involved in the gluconeogenesis. Catalyzes stereospecifically the conversion of dihydroxyacetone phosphate (DHAP) to D-glyceraldehyde-3-phosphate (G3P).</text>
</comment>
<comment type="catalytic activity">
    <reaction evidence="1">
        <text>D-glyceraldehyde 3-phosphate = dihydroxyacetone phosphate</text>
        <dbReference type="Rhea" id="RHEA:18585"/>
        <dbReference type="ChEBI" id="CHEBI:57642"/>
        <dbReference type="ChEBI" id="CHEBI:59776"/>
        <dbReference type="EC" id="5.3.1.1"/>
    </reaction>
</comment>
<comment type="pathway">
    <text evidence="1">Carbohydrate biosynthesis; gluconeogenesis.</text>
</comment>
<comment type="pathway">
    <text evidence="1">Carbohydrate degradation; glycolysis; D-glyceraldehyde 3-phosphate from glycerone phosphate: step 1/1.</text>
</comment>
<comment type="subunit">
    <text evidence="1">Homodimer.</text>
</comment>
<comment type="subcellular location">
    <subcellularLocation>
        <location evidence="1">Cytoplasm</location>
    </subcellularLocation>
</comment>
<comment type="similarity">
    <text evidence="1">Belongs to the triosephosphate isomerase family.</text>
</comment>
<reference key="1">
    <citation type="journal article" date="2007" name="J. Bacteriol.">
        <title>The complete genome sequence of the lactic acid bacterial paradigm Lactococcus lactis subsp. cremoris MG1363.</title>
        <authorList>
            <person name="Wegmann U."/>
            <person name="O'Connell-Motherway M."/>
            <person name="Zomer A."/>
            <person name="Buist G."/>
            <person name="Shearman C."/>
            <person name="Canchaya C."/>
            <person name="Ventura M."/>
            <person name="Goesmann A."/>
            <person name="Gasson M.J."/>
            <person name="Kuipers O.P."/>
            <person name="van Sinderen D."/>
            <person name="Kok J."/>
        </authorList>
    </citation>
    <scope>NUCLEOTIDE SEQUENCE [LARGE SCALE GENOMIC DNA]</scope>
    <source>
        <strain>MG1363</strain>
    </source>
</reference>
<gene>
    <name evidence="1" type="primary">tpiA</name>
    <name type="ordered locus">llmg_1424</name>
</gene>
<name>TPIS_LACLM</name>
<organism>
    <name type="scientific">Lactococcus lactis subsp. cremoris (strain MG1363)</name>
    <dbReference type="NCBI Taxonomy" id="416870"/>
    <lineage>
        <taxon>Bacteria</taxon>
        <taxon>Bacillati</taxon>
        <taxon>Bacillota</taxon>
        <taxon>Bacilli</taxon>
        <taxon>Lactobacillales</taxon>
        <taxon>Streptococcaceae</taxon>
        <taxon>Lactococcus</taxon>
        <taxon>Lactococcus cremoris subsp. cremoris</taxon>
    </lineage>
</organism>
<proteinExistence type="inferred from homology"/>